<proteinExistence type="evidence at protein level"/>
<keyword id="KW-0027">Amidation</keyword>
<keyword id="KW-0903">Direct protein sequencing</keyword>
<keyword id="KW-0527">Neuropeptide</keyword>
<keyword id="KW-0964">Secreted</keyword>
<dbReference type="GO" id="GO:0005576">
    <property type="term" value="C:extracellular region"/>
    <property type="evidence" value="ECO:0007669"/>
    <property type="project" value="UniProtKB-SubCell"/>
</dbReference>
<dbReference type="GO" id="GO:0005184">
    <property type="term" value="F:neuropeptide hormone activity"/>
    <property type="evidence" value="ECO:0007669"/>
    <property type="project" value="InterPro"/>
</dbReference>
<dbReference type="GO" id="GO:0007218">
    <property type="term" value="P:neuropeptide signaling pathway"/>
    <property type="evidence" value="ECO:0007669"/>
    <property type="project" value="UniProtKB-KW"/>
</dbReference>
<dbReference type="InterPro" id="IPR001484">
    <property type="entry name" value="Pyrokinin_CS"/>
</dbReference>
<dbReference type="PROSITE" id="PS00539">
    <property type="entry name" value="PYROKININ"/>
    <property type="match status" value="1"/>
</dbReference>
<protein>
    <recommendedName>
        <fullName>Pyrokinin-6</fullName>
    </recommendedName>
    <alternativeName>
        <fullName>FXPRL-amide</fullName>
    </alternativeName>
</protein>
<feature type="peptide" id="PRO_0000044356" description="Pyrokinin-6">
    <location>
        <begin position="1"/>
        <end position="14"/>
    </location>
</feature>
<feature type="modified residue" description="Leucine amide" evidence="3">
    <location>
        <position position="14"/>
    </location>
</feature>
<organism>
    <name type="scientific">Deropeltis sp. (strain Kenya)</name>
    <dbReference type="NCBI Taxonomy" id="303920"/>
    <lineage>
        <taxon>Eukaryota</taxon>
        <taxon>Metazoa</taxon>
        <taxon>Ecdysozoa</taxon>
        <taxon>Arthropoda</taxon>
        <taxon>Hexapoda</taxon>
        <taxon>Insecta</taxon>
        <taxon>Pterygota</taxon>
        <taxon>Neoptera</taxon>
        <taxon>Polyneoptera</taxon>
        <taxon>Dictyoptera</taxon>
        <taxon>Blattodea</taxon>
        <taxon>Blattoidea</taxon>
        <taxon>Blattidae</taxon>
        <taxon>Blattinae</taxon>
        <taxon>Deropeltis</taxon>
    </lineage>
</organism>
<comment type="function">
    <text evidence="1">Myoactive.</text>
</comment>
<comment type="subcellular location">
    <subcellularLocation>
        <location evidence="4">Secreted</location>
    </subcellularLocation>
</comment>
<comment type="tissue specificity">
    <text evidence="4">Expressed in the brain, subesophageal ganglion and in the retrocerebral complex (mainly corpora cardiaca).</text>
</comment>
<comment type="mass spectrometry" mass="1586.8" method="MALDI" evidence="3"/>
<comment type="similarity">
    <text evidence="2">Belongs to the pyrokinin family.</text>
</comment>
<accession>P84365</accession>
<evidence type="ECO:0000250" key="1">
    <source>
        <dbReference type="UniProtKB" id="P82693"/>
    </source>
</evidence>
<evidence type="ECO:0000255" key="2"/>
<evidence type="ECO:0000269" key="3">
    <source>
    </source>
</evidence>
<evidence type="ECO:0000269" key="4">
    <source ref="2"/>
</evidence>
<evidence type="ECO:0000305" key="5"/>
<reference evidence="5" key="1">
    <citation type="journal article" date="2005" name="Peptides">
        <title>Peptidomics of neurohemal organs from species of the cockroach family Blattidae: how do neuropeptides of closely related species differ?</title>
        <authorList>
            <person name="Predel R."/>
            <person name="Gaede G."/>
        </authorList>
    </citation>
    <scope>PROTEIN SEQUENCE</scope>
    <scope>MASS SPECTROMETRY</scope>
    <scope>AMIDATION AT LEU-14</scope>
    <source>
        <tissue evidence="3">Corpora allata</tissue>
    </source>
</reference>
<reference evidence="5" key="2">
    <citation type="submission" date="2004-11" db="UniProtKB">
        <authorList>
            <person name="Predel R."/>
            <person name="Gaede G."/>
        </authorList>
    </citation>
    <scope>SUBCELLULAR LOCATION</scope>
    <scope>TISSUE SPECIFICITY</scope>
</reference>
<sequence length="14" mass="1588">SDPEVPGMWFGPRL</sequence>
<name>PPK6_DERKE</name>